<keyword id="KW-1185">Reference proteome</keyword>
<keyword id="KW-0687">Ribonucleoprotein</keyword>
<keyword id="KW-0689">Ribosomal protein</keyword>
<comment type="subunit">
    <text>Part of the 50S ribosomal subunit.</text>
</comment>
<comment type="miscellaneous">
    <text evidence="1">This protein is located near the guanosine triphosphatase center of the 50S subunit.</text>
</comment>
<comment type="similarity">
    <text evidence="2">Belongs to the universal ribosomal protein uL30 family.</text>
</comment>
<feature type="initiator methionine" description="Removed" evidence="1">
    <location>
        <position position="1"/>
    </location>
</feature>
<feature type="chain" id="PRO_0000104592" description="Large ribosomal subunit protein uL30">
    <location>
        <begin position="2"/>
        <end position="59"/>
    </location>
</feature>
<evidence type="ECO:0000250" key="1"/>
<evidence type="ECO:0000255" key="2">
    <source>
        <dbReference type="HAMAP-Rule" id="MF_01371"/>
    </source>
</evidence>
<evidence type="ECO:0000305" key="3"/>
<reference key="1">
    <citation type="journal article" date="2002" name="Proc. Natl. Acad. Sci. U.S.A.">
        <title>Extensive mosaic structure revealed by the complete genome sequence of uropathogenic Escherichia coli.</title>
        <authorList>
            <person name="Welch R.A."/>
            <person name="Burland V."/>
            <person name="Plunkett G. III"/>
            <person name="Redford P."/>
            <person name="Roesch P."/>
            <person name="Rasko D."/>
            <person name="Buckles E.L."/>
            <person name="Liou S.-R."/>
            <person name="Boutin A."/>
            <person name="Hackett J."/>
            <person name="Stroud D."/>
            <person name="Mayhew G.F."/>
            <person name="Rose D.J."/>
            <person name="Zhou S."/>
            <person name="Schwartz D.C."/>
            <person name="Perna N.T."/>
            <person name="Mobley H.L.T."/>
            <person name="Donnenberg M.S."/>
            <person name="Blattner F.R."/>
        </authorList>
    </citation>
    <scope>NUCLEOTIDE SEQUENCE [LARGE SCALE GENOMIC DNA]</scope>
    <source>
        <strain>CFT073 / ATCC 700928 / UPEC</strain>
    </source>
</reference>
<proteinExistence type="inferred from homology"/>
<sequence>MAKTIKITQTRSAIGRLPKHKATLLGLGLRRIGHTVEREDTPAIRGMINAVSFMVKVEE</sequence>
<name>RL30_ECOL6</name>
<gene>
    <name evidence="2" type="primary">rpmD</name>
    <name type="ordered locus">c4063</name>
</gene>
<protein>
    <recommendedName>
        <fullName evidence="2">Large ribosomal subunit protein uL30</fullName>
    </recommendedName>
    <alternativeName>
        <fullName evidence="3">50S ribosomal protein L30</fullName>
    </alternativeName>
</protein>
<accession>P0AG52</accession>
<accession>P02430</accession>
<dbReference type="EMBL" id="AE014075">
    <property type="protein sequence ID" value="AAN82501.1"/>
    <property type="molecule type" value="Genomic_DNA"/>
</dbReference>
<dbReference type="RefSeq" id="WP_001140433.1">
    <property type="nucleotide sequence ID" value="NZ_CP051263.1"/>
</dbReference>
<dbReference type="SMR" id="P0AG52"/>
<dbReference type="STRING" id="199310.c4063"/>
<dbReference type="GeneID" id="93778685"/>
<dbReference type="KEGG" id="ecc:c4063"/>
<dbReference type="eggNOG" id="COG1841">
    <property type="taxonomic scope" value="Bacteria"/>
</dbReference>
<dbReference type="HOGENOM" id="CLU_131047_1_4_6"/>
<dbReference type="BioCyc" id="ECOL199310:C4063-MONOMER"/>
<dbReference type="Proteomes" id="UP000001410">
    <property type="component" value="Chromosome"/>
</dbReference>
<dbReference type="GO" id="GO:0022625">
    <property type="term" value="C:cytosolic large ribosomal subunit"/>
    <property type="evidence" value="ECO:0007669"/>
    <property type="project" value="TreeGrafter"/>
</dbReference>
<dbReference type="GO" id="GO:0003735">
    <property type="term" value="F:structural constituent of ribosome"/>
    <property type="evidence" value="ECO:0007669"/>
    <property type="project" value="InterPro"/>
</dbReference>
<dbReference type="GO" id="GO:0006412">
    <property type="term" value="P:translation"/>
    <property type="evidence" value="ECO:0007669"/>
    <property type="project" value="UniProtKB-UniRule"/>
</dbReference>
<dbReference type="CDD" id="cd01658">
    <property type="entry name" value="Ribosomal_L30"/>
    <property type="match status" value="1"/>
</dbReference>
<dbReference type="FunFam" id="3.30.1390.20:FF:000001">
    <property type="entry name" value="50S ribosomal protein L30"/>
    <property type="match status" value="1"/>
</dbReference>
<dbReference type="Gene3D" id="3.30.1390.20">
    <property type="entry name" value="Ribosomal protein L30, ferredoxin-like fold domain"/>
    <property type="match status" value="1"/>
</dbReference>
<dbReference type="HAMAP" id="MF_01371_B">
    <property type="entry name" value="Ribosomal_uL30_B"/>
    <property type="match status" value="1"/>
</dbReference>
<dbReference type="InterPro" id="IPR036919">
    <property type="entry name" value="Ribo_uL30_ferredoxin-like_sf"/>
</dbReference>
<dbReference type="InterPro" id="IPR005996">
    <property type="entry name" value="Ribosomal_uL30_bac-type"/>
</dbReference>
<dbReference type="InterPro" id="IPR018038">
    <property type="entry name" value="Ribosomal_uL30_CS"/>
</dbReference>
<dbReference type="InterPro" id="IPR016082">
    <property type="entry name" value="Ribosomal_uL30_ferredoxin-like"/>
</dbReference>
<dbReference type="NCBIfam" id="TIGR01308">
    <property type="entry name" value="rpmD_bact"/>
    <property type="match status" value="1"/>
</dbReference>
<dbReference type="PANTHER" id="PTHR15892:SF2">
    <property type="entry name" value="LARGE RIBOSOMAL SUBUNIT PROTEIN UL30M"/>
    <property type="match status" value="1"/>
</dbReference>
<dbReference type="PANTHER" id="PTHR15892">
    <property type="entry name" value="MITOCHONDRIAL RIBOSOMAL PROTEIN L30"/>
    <property type="match status" value="1"/>
</dbReference>
<dbReference type="Pfam" id="PF00327">
    <property type="entry name" value="Ribosomal_L30"/>
    <property type="match status" value="1"/>
</dbReference>
<dbReference type="PIRSF" id="PIRSF002211">
    <property type="entry name" value="Ribosomal_L30_bac-type"/>
    <property type="match status" value="1"/>
</dbReference>
<dbReference type="SUPFAM" id="SSF55129">
    <property type="entry name" value="Ribosomal protein L30p/L7e"/>
    <property type="match status" value="1"/>
</dbReference>
<dbReference type="PROSITE" id="PS00634">
    <property type="entry name" value="RIBOSOMAL_L30"/>
    <property type="match status" value="1"/>
</dbReference>
<organism>
    <name type="scientific">Escherichia coli O6:H1 (strain CFT073 / ATCC 700928 / UPEC)</name>
    <dbReference type="NCBI Taxonomy" id="199310"/>
    <lineage>
        <taxon>Bacteria</taxon>
        <taxon>Pseudomonadati</taxon>
        <taxon>Pseudomonadota</taxon>
        <taxon>Gammaproteobacteria</taxon>
        <taxon>Enterobacterales</taxon>
        <taxon>Enterobacteriaceae</taxon>
        <taxon>Escherichia</taxon>
    </lineage>
</organism>